<keyword id="KW-0010">Activator</keyword>
<keyword id="KW-0238">DNA-binding</keyword>
<keyword id="KW-1185">Reference proteome</keyword>
<keyword id="KW-0804">Transcription</keyword>
<keyword id="KW-0805">Transcription regulation</keyword>
<organism>
    <name type="scientific">Escherichia coli O6:H1 (strain CFT073 / ATCC 700928 / UPEC)</name>
    <dbReference type="NCBI Taxonomy" id="199310"/>
    <lineage>
        <taxon>Bacteria</taxon>
        <taxon>Pseudomonadati</taxon>
        <taxon>Pseudomonadota</taxon>
        <taxon>Gammaproteobacteria</taxon>
        <taxon>Enterobacterales</taxon>
        <taxon>Enterobacteriaceae</taxon>
        <taxon>Escherichia</taxon>
    </lineage>
</organism>
<gene>
    <name type="primary">melR</name>
    <name type="ordered locus">c5123</name>
</gene>
<sequence length="302" mass="34928">MNTDTFMCSSDEKQTRSPLSLYSEYQRMEIEFRAPHIMPTSHWHGQVEVNVPFDGDVEYLINNEKVNINQGHITLFWACTPHQLTDTGTCQSMAIFNLPMHLFLSWPLDKDLINHVTHGMVIKSLATQQLSPFEVRRWQQELNSPNEQIRQLAIDEIGLMLKRFSLSGWEPILVNKTSRTHKNSVSRHAQFYVSQMLGFIAENYDQALTINDVAEHVKLNANYAMGIFQRVMQLTMKQYITAMRINHVRALLSDTDKSILDIALTAGFRSSSRFYSTFGKYVGMSPQQYRKLSQQRRQTFPG</sequence>
<accession>P0ACH9</accession>
<accession>P10411</accession>
<feature type="chain" id="PRO_0000194538" description="Melibiose operon regulatory protein">
    <location>
        <begin position="1"/>
        <end position="302"/>
    </location>
</feature>
<feature type="domain" description="HTH araC/xylS-type" evidence="2">
    <location>
        <begin position="194"/>
        <end position="292"/>
    </location>
</feature>
<feature type="DNA-binding region" description="H-T-H motif" evidence="2">
    <location>
        <begin position="211"/>
        <end position="232"/>
    </location>
</feature>
<feature type="DNA-binding region" description="H-T-H motif" evidence="2">
    <location>
        <begin position="259"/>
        <end position="282"/>
    </location>
</feature>
<name>MELR_ECOL6</name>
<reference key="1">
    <citation type="journal article" date="2002" name="Proc. Natl. Acad. Sci. U.S.A.">
        <title>Extensive mosaic structure revealed by the complete genome sequence of uropathogenic Escherichia coli.</title>
        <authorList>
            <person name="Welch R.A."/>
            <person name="Burland V."/>
            <person name="Plunkett G. III"/>
            <person name="Redford P."/>
            <person name="Roesch P."/>
            <person name="Rasko D."/>
            <person name="Buckles E.L."/>
            <person name="Liou S.-R."/>
            <person name="Boutin A."/>
            <person name="Hackett J."/>
            <person name="Stroud D."/>
            <person name="Mayhew G.F."/>
            <person name="Rose D.J."/>
            <person name="Zhou S."/>
            <person name="Schwartz D.C."/>
            <person name="Perna N.T."/>
            <person name="Mobley H.L.T."/>
            <person name="Donnenberg M.S."/>
            <person name="Blattner F.R."/>
        </authorList>
    </citation>
    <scope>NUCLEOTIDE SEQUENCE [LARGE SCALE GENOMIC DNA]</scope>
    <source>
        <strain>CFT073 / ATCC 700928 / UPEC</strain>
    </source>
</reference>
<proteinExistence type="inferred from homology"/>
<dbReference type="EMBL" id="AE014075">
    <property type="protein sequence ID" value="AAN83547.1"/>
    <property type="molecule type" value="Genomic_DNA"/>
</dbReference>
<dbReference type="SMR" id="P0ACH9"/>
<dbReference type="STRING" id="199310.c5123"/>
<dbReference type="KEGG" id="ecc:c5123"/>
<dbReference type="eggNOG" id="COG2169">
    <property type="taxonomic scope" value="Bacteria"/>
</dbReference>
<dbReference type="HOGENOM" id="CLU_000445_88_9_6"/>
<dbReference type="BioCyc" id="ECOL199310:C5123-MONOMER"/>
<dbReference type="Proteomes" id="UP000001410">
    <property type="component" value="Chromosome"/>
</dbReference>
<dbReference type="GO" id="GO:0003700">
    <property type="term" value="F:DNA-binding transcription factor activity"/>
    <property type="evidence" value="ECO:0007669"/>
    <property type="project" value="InterPro"/>
</dbReference>
<dbReference type="GO" id="GO:0043565">
    <property type="term" value="F:sequence-specific DNA binding"/>
    <property type="evidence" value="ECO:0007669"/>
    <property type="project" value="InterPro"/>
</dbReference>
<dbReference type="CDD" id="cd06997">
    <property type="entry name" value="cupin_MelR-like_N"/>
    <property type="match status" value="1"/>
</dbReference>
<dbReference type="FunFam" id="1.10.10.60:FF:000175">
    <property type="entry name" value="Melibiose operon regulatory protein"/>
    <property type="match status" value="1"/>
</dbReference>
<dbReference type="FunFam" id="1.10.10.60:FF:000190">
    <property type="entry name" value="Melibiose operon regulatory protein"/>
    <property type="match status" value="1"/>
</dbReference>
<dbReference type="Gene3D" id="1.10.10.60">
    <property type="entry name" value="Homeodomain-like"/>
    <property type="match status" value="2"/>
</dbReference>
<dbReference type="Gene3D" id="2.60.120.10">
    <property type="entry name" value="Jelly Rolls"/>
    <property type="match status" value="1"/>
</dbReference>
<dbReference type="InterPro" id="IPR009057">
    <property type="entry name" value="Homeodomain-like_sf"/>
</dbReference>
<dbReference type="InterPro" id="IPR018060">
    <property type="entry name" value="HTH_AraC"/>
</dbReference>
<dbReference type="InterPro" id="IPR018062">
    <property type="entry name" value="HTH_AraC-typ_CS"/>
</dbReference>
<dbReference type="InterPro" id="IPR014710">
    <property type="entry name" value="RmlC-like_jellyroll"/>
</dbReference>
<dbReference type="InterPro" id="IPR011051">
    <property type="entry name" value="RmlC_Cupin_sf"/>
</dbReference>
<dbReference type="InterPro" id="IPR008917">
    <property type="entry name" value="TF_DNA-bd_sf"/>
</dbReference>
<dbReference type="InterPro" id="IPR020449">
    <property type="entry name" value="Tscrpt_reg_AraC-type_HTH"/>
</dbReference>
<dbReference type="NCBIfam" id="NF007693">
    <property type="entry name" value="PRK10371.1"/>
    <property type="match status" value="1"/>
</dbReference>
<dbReference type="PANTHER" id="PTHR43280">
    <property type="entry name" value="ARAC-FAMILY TRANSCRIPTIONAL REGULATOR"/>
    <property type="match status" value="1"/>
</dbReference>
<dbReference type="PANTHER" id="PTHR43280:SF14">
    <property type="entry name" value="MELIBIOSE OPERON REGULATORY PROTEIN"/>
    <property type="match status" value="1"/>
</dbReference>
<dbReference type="Pfam" id="PF12833">
    <property type="entry name" value="HTH_18"/>
    <property type="match status" value="1"/>
</dbReference>
<dbReference type="PRINTS" id="PR00032">
    <property type="entry name" value="HTHARAC"/>
</dbReference>
<dbReference type="SMART" id="SM00342">
    <property type="entry name" value="HTH_ARAC"/>
    <property type="match status" value="1"/>
</dbReference>
<dbReference type="SUPFAM" id="SSF47454">
    <property type="entry name" value="A DNA-binding domain in eukaryotic transcription factors"/>
    <property type="match status" value="1"/>
</dbReference>
<dbReference type="SUPFAM" id="SSF46689">
    <property type="entry name" value="Homeodomain-like"/>
    <property type="match status" value="1"/>
</dbReference>
<dbReference type="SUPFAM" id="SSF51182">
    <property type="entry name" value="RmlC-like cupins"/>
    <property type="match status" value="1"/>
</dbReference>
<dbReference type="PROSITE" id="PS00041">
    <property type="entry name" value="HTH_ARAC_FAMILY_1"/>
    <property type="match status" value="1"/>
</dbReference>
<dbReference type="PROSITE" id="PS01124">
    <property type="entry name" value="HTH_ARAC_FAMILY_2"/>
    <property type="match status" value="1"/>
</dbReference>
<protein>
    <recommendedName>
        <fullName>Melibiose operon regulatory protein</fullName>
    </recommendedName>
</protein>
<evidence type="ECO:0000250" key="1"/>
<evidence type="ECO:0000255" key="2">
    <source>
        <dbReference type="PROSITE-ProRule" id="PRU00593"/>
    </source>
</evidence>
<comment type="function">
    <text evidence="1">Transcription activator for the expression of the melAB operon. MelR binds at two sites located upstream of the melAB transcription site (By similarity).</text>
</comment>